<comment type="catalytic activity">
    <reaction evidence="1">
        <text>urea + 2 H2O + H(+) = hydrogencarbonate + 2 NH4(+)</text>
        <dbReference type="Rhea" id="RHEA:20557"/>
        <dbReference type="ChEBI" id="CHEBI:15377"/>
        <dbReference type="ChEBI" id="CHEBI:15378"/>
        <dbReference type="ChEBI" id="CHEBI:16199"/>
        <dbReference type="ChEBI" id="CHEBI:17544"/>
        <dbReference type="ChEBI" id="CHEBI:28938"/>
        <dbReference type="EC" id="3.5.1.5"/>
    </reaction>
</comment>
<comment type="pathway">
    <text evidence="1">Nitrogen metabolism; urea degradation; CO(2) and NH(3) from urea (urease route): step 1/1.</text>
</comment>
<comment type="subunit">
    <text evidence="1">Heterotrimer of UreA (gamma), UreB (beta) and UreC (alpha) subunits. Three heterotrimers associate to form the active enzyme.</text>
</comment>
<comment type="subcellular location">
    <subcellularLocation>
        <location evidence="1">Cytoplasm</location>
    </subcellularLocation>
</comment>
<comment type="similarity">
    <text evidence="1">Belongs to the urease gamma subunit family.</text>
</comment>
<proteinExistence type="inferred from homology"/>
<name>URE3_SYNS9</name>
<evidence type="ECO:0000255" key="1">
    <source>
        <dbReference type="HAMAP-Rule" id="MF_00739"/>
    </source>
</evidence>
<sequence length="100" mass="11239">MHLSPQEKDKLLIVTAALLAERRLNRGVKLNHPEAMAWLSFLVLEGARDGQTVAELMQAGTTWLRRDQVMEGVPELVEEVQIEAVFPDGTKLVTLHDPIR</sequence>
<gene>
    <name evidence="1" type="primary">ureA</name>
    <name type="ordered locus">Syncc9902_2255</name>
</gene>
<dbReference type="EC" id="3.5.1.5" evidence="1"/>
<dbReference type="EMBL" id="CP000097">
    <property type="protein sequence ID" value="ABB27213.1"/>
    <property type="molecule type" value="Genomic_DNA"/>
</dbReference>
<dbReference type="RefSeq" id="WP_009788618.1">
    <property type="nucleotide sequence ID" value="NC_007513.1"/>
</dbReference>
<dbReference type="SMR" id="Q3AVR3"/>
<dbReference type="STRING" id="316279.Syncc9902_2255"/>
<dbReference type="KEGG" id="sye:Syncc9902_2255"/>
<dbReference type="eggNOG" id="COG0831">
    <property type="taxonomic scope" value="Bacteria"/>
</dbReference>
<dbReference type="HOGENOM" id="CLU_145825_1_0_3"/>
<dbReference type="OrthoDB" id="9793527at2"/>
<dbReference type="UniPathway" id="UPA00258">
    <property type="reaction ID" value="UER00370"/>
</dbReference>
<dbReference type="Proteomes" id="UP000002712">
    <property type="component" value="Chromosome"/>
</dbReference>
<dbReference type="GO" id="GO:0005737">
    <property type="term" value="C:cytoplasm"/>
    <property type="evidence" value="ECO:0007669"/>
    <property type="project" value="UniProtKB-SubCell"/>
</dbReference>
<dbReference type="GO" id="GO:0016151">
    <property type="term" value="F:nickel cation binding"/>
    <property type="evidence" value="ECO:0007669"/>
    <property type="project" value="InterPro"/>
</dbReference>
<dbReference type="GO" id="GO:0009039">
    <property type="term" value="F:urease activity"/>
    <property type="evidence" value="ECO:0007669"/>
    <property type="project" value="UniProtKB-UniRule"/>
</dbReference>
<dbReference type="GO" id="GO:0043419">
    <property type="term" value="P:urea catabolic process"/>
    <property type="evidence" value="ECO:0007669"/>
    <property type="project" value="UniProtKB-UniRule"/>
</dbReference>
<dbReference type="CDD" id="cd00390">
    <property type="entry name" value="Urease_gamma"/>
    <property type="match status" value="1"/>
</dbReference>
<dbReference type="Gene3D" id="3.30.280.10">
    <property type="entry name" value="Urease, gamma-like subunit"/>
    <property type="match status" value="1"/>
</dbReference>
<dbReference type="HAMAP" id="MF_00739">
    <property type="entry name" value="Urease_gamma"/>
    <property type="match status" value="1"/>
</dbReference>
<dbReference type="InterPro" id="IPR012010">
    <property type="entry name" value="Urease_gamma"/>
</dbReference>
<dbReference type="InterPro" id="IPR002026">
    <property type="entry name" value="Urease_gamma/gamma-beta_su"/>
</dbReference>
<dbReference type="InterPro" id="IPR036463">
    <property type="entry name" value="Urease_gamma_sf"/>
</dbReference>
<dbReference type="InterPro" id="IPR050069">
    <property type="entry name" value="Urease_subunit"/>
</dbReference>
<dbReference type="NCBIfam" id="NF009712">
    <property type="entry name" value="PRK13241.1"/>
    <property type="match status" value="1"/>
</dbReference>
<dbReference type="NCBIfam" id="TIGR00193">
    <property type="entry name" value="urease_gam"/>
    <property type="match status" value="1"/>
</dbReference>
<dbReference type="PANTHER" id="PTHR33569">
    <property type="entry name" value="UREASE"/>
    <property type="match status" value="1"/>
</dbReference>
<dbReference type="PANTHER" id="PTHR33569:SF1">
    <property type="entry name" value="UREASE"/>
    <property type="match status" value="1"/>
</dbReference>
<dbReference type="Pfam" id="PF00547">
    <property type="entry name" value="Urease_gamma"/>
    <property type="match status" value="1"/>
</dbReference>
<dbReference type="PIRSF" id="PIRSF001223">
    <property type="entry name" value="Urease_gamma"/>
    <property type="match status" value="1"/>
</dbReference>
<dbReference type="SUPFAM" id="SSF54111">
    <property type="entry name" value="Urease, gamma-subunit"/>
    <property type="match status" value="1"/>
</dbReference>
<feature type="chain" id="PRO_0000239917" description="Urease subunit gamma">
    <location>
        <begin position="1"/>
        <end position="100"/>
    </location>
</feature>
<accession>Q3AVR3</accession>
<protein>
    <recommendedName>
        <fullName evidence="1">Urease subunit gamma</fullName>
        <ecNumber evidence="1">3.5.1.5</ecNumber>
    </recommendedName>
    <alternativeName>
        <fullName evidence="1">Urea amidohydrolase subunit gamma</fullName>
    </alternativeName>
</protein>
<reference key="1">
    <citation type="submission" date="2005-08" db="EMBL/GenBank/DDBJ databases">
        <title>Complete sequence of Synechococcus sp. CC9902.</title>
        <authorList>
            <person name="Copeland A."/>
            <person name="Lucas S."/>
            <person name="Lapidus A."/>
            <person name="Barry K."/>
            <person name="Detter J.C."/>
            <person name="Glavina T."/>
            <person name="Hammon N."/>
            <person name="Israni S."/>
            <person name="Pitluck S."/>
            <person name="Martinez M."/>
            <person name="Schmutz J."/>
            <person name="Larimer F."/>
            <person name="Land M."/>
            <person name="Kyrpides N."/>
            <person name="Ivanova N."/>
            <person name="Richardson P."/>
        </authorList>
    </citation>
    <scope>NUCLEOTIDE SEQUENCE [LARGE SCALE GENOMIC DNA]</scope>
    <source>
        <strain>CC9902</strain>
    </source>
</reference>
<organism>
    <name type="scientific">Synechococcus sp. (strain CC9902)</name>
    <dbReference type="NCBI Taxonomy" id="316279"/>
    <lineage>
        <taxon>Bacteria</taxon>
        <taxon>Bacillati</taxon>
        <taxon>Cyanobacteriota</taxon>
        <taxon>Cyanophyceae</taxon>
        <taxon>Synechococcales</taxon>
        <taxon>Synechococcaceae</taxon>
        <taxon>Synechococcus</taxon>
    </lineage>
</organism>
<keyword id="KW-0963">Cytoplasm</keyword>
<keyword id="KW-0378">Hydrolase</keyword>
<keyword id="KW-1185">Reference proteome</keyword>